<dbReference type="EC" id="2.7.1.11" evidence="1"/>
<dbReference type="EMBL" id="Z79690">
    <property type="protein sequence ID" value="CAB01923.1"/>
    <property type="molecule type" value="Genomic_DNA"/>
</dbReference>
<dbReference type="RefSeq" id="XP_001398626.1">
    <property type="nucleotide sequence ID" value="XM_001398589.3"/>
</dbReference>
<dbReference type="SMR" id="P78985"/>
<dbReference type="PaxDb" id="5061-CADANGAP00013544"/>
<dbReference type="EnsemblFungi" id="CAK47239">
    <property type="protein sequence ID" value="CAK47239"/>
    <property type="gene ID" value="An18g01670"/>
</dbReference>
<dbReference type="GeneID" id="4989727"/>
<dbReference type="KEGG" id="ang:An18g01670"/>
<dbReference type="VEuPathDB" id="FungiDB:An18g01670"/>
<dbReference type="VEuPathDB" id="FungiDB:ASPNIDRAFT2_1128408"/>
<dbReference type="VEuPathDB" id="FungiDB:ATCC64974_110490"/>
<dbReference type="VEuPathDB" id="FungiDB:M747DRAFT_252932"/>
<dbReference type="eggNOG" id="KOG2440">
    <property type="taxonomic scope" value="Eukaryota"/>
</dbReference>
<dbReference type="OrthoDB" id="537915at2759"/>
<dbReference type="BRENDA" id="2.7.1.11">
    <property type="organism ID" value="518"/>
</dbReference>
<dbReference type="SABIO-RK" id="P78985"/>
<dbReference type="UniPathway" id="UPA00109">
    <property type="reaction ID" value="UER00182"/>
</dbReference>
<dbReference type="GO" id="GO:0005945">
    <property type="term" value="C:6-phosphofructokinase complex"/>
    <property type="evidence" value="ECO:0007669"/>
    <property type="project" value="TreeGrafter"/>
</dbReference>
<dbReference type="GO" id="GO:0005739">
    <property type="term" value="C:mitochondrion"/>
    <property type="evidence" value="ECO:0007669"/>
    <property type="project" value="TreeGrafter"/>
</dbReference>
<dbReference type="GO" id="GO:0003872">
    <property type="term" value="F:6-phosphofructokinase activity"/>
    <property type="evidence" value="ECO:0007669"/>
    <property type="project" value="UniProtKB-UniRule"/>
</dbReference>
<dbReference type="GO" id="GO:0016208">
    <property type="term" value="F:AMP binding"/>
    <property type="evidence" value="ECO:0007669"/>
    <property type="project" value="TreeGrafter"/>
</dbReference>
<dbReference type="GO" id="GO:0005524">
    <property type="term" value="F:ATP binding"/>
    <property type="evidence" value="ECO:0007669"/>
    <property type="project" value="UniProtKB-KW"/>
</dbReference>
<dbReference type="GO" id="GO:0070095">
    <property type="term" value="F:fructose-6-phosphate binding"/>
    <property type="evidence" value="ECO:0007669"/>
    <property type="project" value="TreeGrafter"/>
</dbReference>
<dbReference type="GO" id="GO:0042802">
    <property type="term" value="F:identical protein binding"/>
    <property type="evidence" value="ECO:0007669"/>
    <property type="project" value="TreeGrafter"/>
</dbReference>
<dbReference type="GO" id="GO:0046872">
    <property type="term" value="F:metal ion binding"/>
    <property type="evidence" value="ECO:0007669"/>
    <property type="project" value="UniProtKB-KW"/>
</dbReference>
<dbReference type="GO" id="GO:0048029">
    <property type="term" value="F:monosaccharide binding"/>
    <property type="evidence" value="ECO:0007669"/>
    <property type="project" value="TreeGrafter"/>
</dbReference>
<dbReference type="GO" id="GO:0061621">
    <property type="term" value="P:canonical glycolysis"/>
    <property type="evidence" value="ECO:0007669"/>
    <property type="project" value="TreeGrafter"/>
</dbReference>
<dbReference type="GO" id="GO:0030388">
    <property type="term" value="P:fructose 1,6-bisphosphate metabolic process"/>
    <property type="evidence" value="ECO:0007669"/>
    <property type="project" value="TreeGrafter"/>
</dbReference>
<dbReference type="GO" id="GO:0006002">
    <property type="term" value="P:fructose 6-phosphate metabolic process"/>
    <property type="evidence" value="ECO:0007669"/>
    <property type="project" value="InterPro"/>
</dbReference>
<dbReference type="FunFam" id="3.40.50.450:FF:000010">
    <property type="entry name" value="ATP-dependent 6-phosphofructokinase"/>
    <property type="match status" value="1"/>
</dbReference>
<dbReference type="FunFam" id="3.40.50.460:FF:000007">
    <property type="entry name" value="ATP-dependent 6-phosphofructokinase"/>
    <property type="match status" value="1"/>
</dbReference>
<dbReference type="FunFam" id="3.40.50.460:FF:000008">
    <property type="entry name" value="ATP-dependent 6-phosphofructokinase"/>
    <property type="match status" value="1"/>
</dbReference>
<dbReference type="Gene3D" id="3.40.50.450">
    <property type="match status" value="2"/>
</dbReference>
<dbReference type="Gene3D" id="3.40.50.460">
    <property type="entry name" value="Phosphofructokinase domain"/>
    <property type="match status" value="2"/>
</dbReference>
<dbReference type="HAMAP" id="MF_03184">
    <property type="entry name" value="Phosphofructokinase_I_E"/>
    <property type="match status" value="1"/>
</dbReference>
<dbReference type="InterPro" id="IPR009161">
    <property type="entry name" value="6-Pfructokinase_euk"/>
</dbReference>
<dbReference type="InterPro" id="IPR022953">
    <property type="entry name" value="ATP_PFK"/>
</dbReference>
<dbReference type="InterPro" id="IPR015912">
    <property type="entry name" value="Phosphofructokinase_CS"/>
</dbReference>
<dbReference type="InterPro" id="IPR000023">
    <property type="entry name" value="Phosphofructokinase_dom"/>
</dbReference>
<dbReference type="InterPro" id="IPR035966">
    <property type="entry name" value="PKF_sf"/>
</dbReference>
<dbReference type="NCBIfam" id="TIGR02478">
    <property type="entry name" value="6PF1K_euk"/>
    <property type="match status" value="1"/>
</dbReference>
<dbReference type="PANTHER" id="PTHR13697:SF4">
    <property type="entry name" value="ATP-DEPENDENT 6-PHOSPHOFRUCTOKINASE"/>
    <property type="match status" value="1"/>
</dbReference>
<dbReference type="PANTHER" id="PTHR13697">
    <property type="entry name" value="PHOSPHOFRUCTOKINASE"/>
    <property type="match status" value="1"/>
</dbReference>
<dbReference type="Pfam" id="PF00365">
    <property type="entry name" value="PFK"/>
    <property type="match status" value="2"/>
</dbReference>
<dbReference type="PIRSF" id="PIRSF000533">
    <property type="entry name" value="ATP_PFK_euk"/>
    <property type="match status" value="1"/>
</dbReference>
<dbReference type="PRINTS" id="PR00476">
    <property type="entry name" value="PHFRCTKINASE"/>
</dbReference>
<dbReference type="SUPFAM" id="SSF53784">
    <property type="entry name" value="Phosphofructokinase"/>
    <property type="match status" value="2"/>
</dbReference>
<dbReference type="PROSITE" id="PS00433">
    <property type="entry name" value="PHOSPHOFRUCTOKINASE"/>
    <property type="match status" value="2"/>
</dbReference>
<proteinExistence type="inferred from homology"/>
<organism>
    <name type="scientific">Aspergillus niger</name>
    <dbReference type="NCBI Taxonomy" id="5061"/>
    <lineage>
        <taxon>Eukaryota</taxon>
        <taxon>Fungi</taxon>
        <taxon>Dikarya</taxon>
        <taxon>Ascomycota</taxon>
        <taxon>Pezizomycotina</taxon>
        <taxon>Eurotiomycetes</taxon>
        <taxon>Eurotiomycetidae</taxon>
        <taxon>Eurotiales</taxon>
        <taxon>Aspergillaceae</taxon>
        <taxon>Aspergillus</taxon>
        <taxon>Aspergillus subgen. Circumdati</taxon>
    </lineage>
</organism>
<evidence type="ECO:0000255" key="1">
    <source>
        <dbReference type="HAMAP-Rule" id="MF_03184"/>
    </source>
</evidence>
<evidence type="ECO:0000256" key="2">
    <source>
        <dbReference type="SAM" id="MobiDB-lite"/>
    </source>
</evidence>
<gene>
    <name type="primary">pfkA</name>
</gene>
<sequence>MAPPQAPVQPPKRRRIGVLTSGGDAPGMNGVVRAVVRMAIHSDCEAFAVYEGYEGLVNGGDMIRQLHWEDVRGWLSRGGTLIGSARCMTFRERPGRLRAAKNMVLRGIDALVVCGGDGSLTGADVFRSEWPGLLKELVETGELTEEQVKPYQILNIVGLVGSIDNDMSGTDATIGCYSSLTRICDAVDDVFDTAFSHQRGFVIEVMGRHCGWLALMSAISTGADWLFVPEMPPKDGWEDDMCAIITKNRKERGKRRTIVIVAEGAQDRHLNKISSSKIKDILTERLNLDTRVTVLGHTQRGGAACAYDRWLSTLQGVEAVRAVLDMKPEAPSPVITIRENKILRMPLMDAVQHTKTVTKHIQNKEFAEAMALRDSEFKEYHFSYINTSTPDHPKLLLPENKRMRIGIIHVGAPAGGMNQATRAAVAYCLTRGHTPLAIHNGFPGLCRHYDDTPICSVREVAWQESDAWVNEGGSDIGTNRGLPGDDLATTAKSFKKFGFDALFVVGGFEAFTAVSQLRQAREKYPEFKIPMTVLPATISNNVPGTEYSLGSDTCLNTLIDFCDAIRQSASSSRRRVFVIETQGGKSGYIATTAGLSVGAVAVYIPEEGIDIKMLARDIDFLRDNFARDKGANRAGKIILRNECASSTYTTQVVADMIKEEAKGRFESRAAVPGHFQQGGKPSPMDRIRALRMATKCMLHLESYAGKSADEIAADELSASVIGIKGSQVLFSPMGGETGLEATETDWARRRPKTEFWLELQDTVNILSGRASVNNATWSCYENA</sequence>
<keyword id="KW-0021">Allosteric enzyme</keyword>
<keyword id="KW-0067">ATP-binding</keyword>
<keyword id="KW-0963">Cytoplasm</keyword>
<keyword id="KW-0324">Glycolysis</keyword>
<keyword id="KW-0418">Kinase</keyword>
<keyword id="KW-0460">Magnesium</keyword>
<keyword id="KW-0479">Metal-binding</keyword>
<keyword id="KW-0547">Nucleotide-binding</keyword>
<keyword id="KW-0808">Transferase</keyword>
<comment type="function">
    <text evidence="1">Catalyzes the phosphorylation of D-fructose 6-phosphate to fructose 1,6-bisphosphate by ATP, the first committing step of glycolysis.</text>
</comment>
<comment type="catalytic activity">
    <reaction evidence="1">
        <text>beta-D-fructose 6-phosphate + ATP = beta-D-fructose 1,6-bisphosphate + ADP + H(+)</text>
        <dbReference type="Rhea" id="RHEA:16109"/>
        <dbReference type="ChEBI" id="CHEBI:15378"/>
        <dbReference type="ChEBI" id="CHEBI:30616"/>
        <dbReference type="ChEBI" id="CHEBI:32966"/>
        <dbReference type="ChEBI" id="CHEBI:57634"/>
        <dbReference type="ChEBI" id="CHEBI:456216"/>
        <dbReference type="EC" id="2.7.1.11"/>
    </reaction>
</comment>
<comment type="cofactor">
    <cofactor evidence="1">
        <name>Mg(2+)</name>
        <dbReference type="ChEBI" id="CHEBI:18420"/>
    </cofactor>
</comment>
<comment type="activity regulation">
    <text evidence="1">Allosterically activated by ADP, AMP, or fructose 2,6-bisphosphate, and allosterically inhibited by ATP or citrate.</text>
</comment>
<comment type="pathway">
    <text evidence="1">Carbohydrate degradation; glycolysis; D-glyceraldehyde 3-phosphate and glycerone phosphate from D-glucose: step 3/4.</text>
</comment>
<comment type="subunit">
    <text evidence="1">Homotetramer.</text>
</comment>
<comment type="subcellular location">
    <subcellularLocation>
        <location evidence="1">Cytoplasm</location>
    </subcellularLocation>
</comment>
<comment type="similarity">
    <text evidence="1">Belongs to the phosphofructokinase type A (PFKA) family. ATP-dependent PFK group I subfamily. Eukaryotic two domain clade 'E' sub-subfamily.</text>
</comment>
<accession>P78985</accession>
<name>PFKA_ASPNG</name>
<reference key="1">
    <citation type="submission" date="1997-03" db="EMBL/GenBank/DDBJ databases">
        <authorList>
            <person name="de Graaff L.H."/>
            <person name="Everse S.J."/>
            <person name="van den Broeck H.C."/>
            <person name="Bussink R."/>
            <person name="Visser J."/>
        </authorList>
    </citation>
    <scope>NUCLEOTIDE SEQUENCE [GENOMIC DNA]</scope>
    <source>
        <strain>ATCC 9029 / NRRL 3 / CBS 120.49 / DSM 2466 / N400 / FGSC 732</strain>
    </source>
</reference>
<feature type="chain" id="PRO_0000112035" description="ATP-dependent 6-phosphofructokinase">
    <location>
        <begin position="1"/>
        <end position="783"/>
    </location>
</feature>
<feature type="region of interest" description="N-terminal catalytic PFK domain 1">
    <location>
        <begin position="1"/>
        <end position="389"/>
    </location>
</feature>
<feature type="region of interest" description="Disordered" evidence="2">
    <location>
        <begin position="1"/>
        <end position="20"/>
    </location>
</feature>
<feature type="region of interest" description="Interdomain linker">
    <location>
        <begin position="390"/>
        <end position="403"/>
    </location>
</feature>
<feature type="region of interest" description="C-terminal regulatory PFK domain 2">
    <location>
        <begin position="404"/>
        <end position="783"/>
    </location>
</feature>
<feature type="compositionally biased region" description="Pro residues" evidence="2">
    <location>
        <begin position="1"/>
        <end position="10"/>
    </location>
</feature>
<feature type="active site" description="Proton acceptor" evidence="1">
    <location>
        <position position="164"/>
    </location>
</feature>
<feature type="binding site" evidence="1">
    <location>
        <position position="23"/>
    </location>
    <ligand>
        <name>ATP</name>
        <dbReference type="ChEBI" id="CHEBI:30616"/>
    </ligand>
</feature>
<feature type="binding site" evidence="1">
    <location>
        <begin position="86"/>
        <end position="87"/>
    </location>
    <ligand>
        <name>ATP</name>
        <dbReference type="ChEBI" id="CHEBI:30616"/>
    </ligand>
</feature>
<feature type="binding site" evidence="1">
    <location>
        <begin position="116"/>
        <end position="119"/>
    </location>
    <ligand>
        <name>ATP</name>
        <dbReference type="ChEBI" id="CHEBI:30616"/>
    </ligand>
</feature>
<feature type="binding site" evidence="1">
    <location>
        <position position="117"/>
    </location>
    <ligand>
        <name>Mg(2+)</name>
        <dbReference type="ChEBI" id="CHEBI:18420"/>
        <note>catalytic</note>
    </ligand>
</feature>
<feature type="binding site" description="in other chain" evidence="1">
    <location>
        <begin position="162"/>
        <end position="164"/>
    </location>
    <ligand>
        <name>substrate</name>
        <note>ligand shared between dimeric partners</note>
    </ligand>
</feature>
<feature type="binding site" evidence="1">
    <location>
        <position position="199"/>
    </location>
    <ligand>
        <name>substrate</name>
        <note>ligand shared between dimeric partners</note>
    </ligand>
</feature>
<feature type="binding site" description="in other chain" evidence="1">
    <location>
        <begin position="206"/>
        <end position="208"/>
    </location>
    <ligand>
        <name>substrate</name>
        <note>ligand shared between dimeric partners</note>
    </ligand>
</feature>
<feature type="binding site" description="in other chain" evidence="1">
    <location>
        <position position="263"/>
    </location>
    <ligand>
        <name>substrate</name>
        <note>ligand shared between dimeric partners</note>
    </ligand>
</feature>
<feature type="binding site" evidence="1">
    <location>
        <position position="291"/>
    </location>
    <ligand>
        <name>substrate</name>
        <note>ligand shared between dimeric partners</note>
    </ligand>
</feature>
<feature type="binding site" description="in other chain" evidence="1">
    <location>
        <begin position="297"/>
        <end position="300"/>
    </location>
    <ligand>
        <name>substrate</name>
        <note>ligand shared between dimeric partners</note>
    </ligand>
</feature>
<feature type="binding site" description="in other chain" evidence="1">
    <location>
        <position position="480"/>
    </location>
    <ligand>
        <name>beta-D-fructose 2,6-bisphosphate</name>
        <dbReference type="ChEBI" id="CHEBI:58579"/>
        <note>allosteric activator; ligand shared between dimeric partners</note>
    </ligand>
</feature>
<feature type="binding site" description="in other chain" evidence="1">
    <location>
        <begin position="537"/>
        <end position="541"/>
    </location>
    <ligand>
        <name>beta-D-fructose 2,6-bisphosphate</name>
        <dbReference type="ChEBI" id="CHEBI:58579"/>
        <note>allosteric activator; ligand shared between dimeric partners</note>
    </ligand>
</feature>
<feature type="binding site" evidence="1">
    <location>
        <position position="575"/>
    </location>
    <ligand>
        <name>beta-D-fructose 2,6-bisphosphate</name>
        <dbReference type="ChEBI" id="CHEBI:58579"/>
        <note>allosteric activator; ligand shared between dimeric partners</note>
    </ligand>
</feature>
<feature type="binding site" description="in other chain" evidence="1">
    <location>
        <begin position="582"/>
        <end position="584"/>
    </location>
    <ligand>
        <name>beta-D-fructose 2,6-bisphosphate</name>
        <dbReference type="ChEBI" id="CHEBI:58579"/>
        <note>allosteric activator; ligand shared between dimeric partners</note>
    </ligand>
</feature>
<feature type="binding site" description="in other chain" evidence="1">
    <location>
        <position position="642"/>
    </location>
    <ligand>
        <name>beta-D-fructose 2,6-bisphosphate</name>
        <dbReference type="ChEBI" id="CHEBI:58579"/>
        <note>allosteric activator; ligand shared between dimeric partners</note>
    </ligand>
</feature>
<feature type="binding site" evidence="1">
    <location>
        <position position="668"/>
    </location>
    <ligand>
        <name>beta-D-fructose 2,6-bisphosphate</name>
        <dbReference type="ChEBI" id="CHEBI:58579"/>
        <note>allosteric activator; ligand shared between dimeric partners</note>
    </ligand>
</feature>
<feature type="binding site" description="in other chain" evidence="1">
    <location>
        <begin position="674"/>
        <end position="677"/>
    </location>
    <ligand>
        <name>beta-D-fructose 2,6-bisphosphate</name>
        <dbReference type="ChEBI" id="CHEBI:58579"/>
        <note>allosteric activator; ligand shared between dimeric partners</note>
    </ligand>
</feature>
<feature type="binding site" description="in other chain" evidence="1">
    <location>
        <position position="749"/>
    </location>
    <ligand>
        <name>beta-D-fructose 2,6-bisphosphate</name>
        <dbReference type="ChEBI" id="CHEBI:58579"/>
        <note>allosteric activator; ligand shared between dimeric partners</note>
    </ligand>
</feature>
<protein>
    <recommendedName>
        <fullName evidence="1">ATP-dependent 6-phosphofructokinase</fullName>
        <shortName evidence="1">ATP-PFK</shortName>
        <shortName evidence="1">Phosphofructokinase</shortName>
        <ecNumber evidence="1">2.7.1.11</ecNumber>
    </recommendedName>
    <alternativeName>
        <fullName evidence="1">Phosphohexokinase</fullName>
    </alternativeName>
</protein>